<gene>
    <name evidence="1" type="primary">ybeY</name>
    <name type="ordered locus">Bcep18194_A6023</name>
</gene>
<dbReference type="EC" id="3.1.-.-" evidence="1"/>
<dbReference type="EMBL" id="CP000151">
    <property type="protein sequence ID" value="ABB09617.1"/>
    <property type="status" value="ALT_INIT"/>
    <property type="molecule type" value="Genomic_DNA"/>
</dbReference>
<dbReference type="RefSeq" id="WP_011353129.1">
    <property type="nucleotide sequence ID" value="NC_007510.1"/>
</dbReference>
<dbReference type="SMR" id="Q39D49"/>
<dbReference type="GeneID" id="45095906"/>
<dbReference type="KEGG" id="bur:Bcep18194_A6023"/>
<dbReference type="PATRIC" id="fig|482957.22.peg.3022"/>
<dbReference type="HOGENOM" id="CLU_1118710_0_0_4"/>
<dbReference type="Proteomes" id="UP000002705">
    <property type="component" value="Chromosome 1"/>
</dbReference>
<dbReference type="GO" id="GO:0005737">
    <property type="term" value="C:cytoplasm"/>
    <property type="evidence" value="ECO:0007669"/>
    <property type="project" value="UniProtKB-SubCell"/>
</dbReference>
<dbReference type="GO" id="GO:0004222">
    <property type="term" value="F:metalloendopeptidase activity"/>
    <property type="evidence" value="ECO:0007669"/>
    <property type="project" value="InterPro"/>
</dbReference>
<dbReference type="GO" id="GO:0004521">
    <property type="term" value="F:RNA endonuclease activity"/>
    <property type="evidence" value="ECO:0007669"/>
    <property type="project" value="UniProtKB-UniRule"/>
</dbReference>
<dbReference type="GO" id="GO:0008270">
    <property type="term" value="F:zinc ion binding"/>
    <property type="evidence" value="ECO:0007669"/>
    <property type="project" value="UniProtKB-UniRule"/>
</dbReference>
<dbReference type="GO" id="GO:0006364">
    <property type="term" value="P:rRNA processing"/>
    <property type="evidence" value="ECO:0007669"/>
    <property type="project" value="UniProtKB-UniRule"/>
</dbReference>
<dbReference type="Gene3D" id="3.40.390.30">
    <property type="entry name" value="Metalloproteases ('zincins'), catalytic domain"/>
    <property type="match status" value="1"/>
</dbReference>
<dbReference type="HAMAP" id="MF_00009">
    <property type="entry name" value="Endoribonucl_YbeY"/>
    <property type="match status" value="1"/>
</dbReference>
<dbReference type="InterPro" id="IPR023091">
    <property type="entry name" value="MetalPrtase_cat_dom_sf_prd"/>
</dbReference>
<dbReference type="InterPro" id="IPR002036">
    <property type="entry name" value="YbeY"/>
</dbReference>
<dbReference type="InterPro" id="IPR020549">
    <property type="entry name" value="YbeY_CS"/>
</dbReference>
<dbReference type="NCBIfam" id="NF010570">
    <property type="entry name" value="PRK13963.1"/>
    <property type="match status" value="1"/>
</dbReference>
<dbReference type="NCBIfam" id="TIGR00043">
    <property type="entry name" value="rRNA maturation RNase YbeY"/>
    <property type="match status" value="1"/>
</dbReference>
<dbReference type="PANTHER" id="PTHR46986">
    <property type="entry name" value="ENDORIBONUCLEASE YBEY, CHLOROPLASTIC"/>
    <property type="match status" value="1"/>
</dbReference>
<dbReference type="PANTHER" id="PTHR46986:SF1">
    <property type="entry name" value="ENDORIBONUCLEASE YBEY, CHLOROPLASTIC"/>
    <property type="match status" value="1"/>
</dbReference>
<dbReference type="Pfam" id="PF02130">
    <property type="entry name" value="YbeY"/>
    <property type="match status" value="1"/>
</dbReference>
<dbReference type="SUPFAM" id="SSF55486">
    <property type="entry name" value="Metalloproteases ('zincins'), catalytic domain"/>
    <property type="match status" value="1"/>
</dbReference>
<dbReference type="PROSITE" id="PS01306">
    <property type="entry name" value="UPF0054"/>
    <property type="match status" value="1"/>
</dbReference>
<organism>
    <name type="scientific">Burkholderia lata (strain ATCC 17760 / DSM 23089 / LMG 22485 / NCIMB 9086 / R18194 / 383)</name>
    <dbReference type="NCBI Taxonomy" id="482957"/>
    <lineage>
        <taxon>Bacteria</taxon>
        <taxon>Pseudomonadati</taxon>
        <taxon>Pseudomonadota</taxon>
        <taxon>Betaproteobacteria</taxon>
        <taxon>Burkholderiales</taxon>
        <taxon>Burkholderiaceae</taxon>
        <taxon>Burkholderia</taxon>
        <taxon>Burkholderia cepacia complex</taxon>
    </lineage>
</organism>
<feature type="chain" id="PRO_0000284176" description="Endoribonuclease YbeY">
    <location>
        <begin position="1"/>
        <end position="172"/>
    </location>
</feature>
<feature type="region of interest" description="Disordered" evidence="2">
    <location>
        <begin position="1"/>
        <end position="21"/>
    </location>
</feature>
<feature type="compositionally biased region" description="Basic and acidic residues" evidence="2">
    <location>
        <begin position="10"/>
        <end position="21"/>
    </location>
</feature>
<feature type="binding site" evidence="1">
    <location>
        <position position="134"/>
    </location>
    <ligand>
        <name>Zn(2+)</name>
        <dbReference type="ChEBI" id="CHEBI:29105"/>
        <note>catalytic</note>
    </ligand>
</feature>
<feature type="binding site" evidence="1">
    <location>
        <position position="138"/>
    </location>
    <ligand>
        <name>Zn(2+)</name>
        <dbReference type="ChEBI" id="CHEBI:29105"/>
        <note>catalytic</note>
    </ligand>
</feature>
<feature type="binding site" evidence="1">
    <location>
        <position position="144"/>
    </location>
    <ligand>
        <name>Zn(2+)</name>
        <dbReference type="ChEBI" id="CHEBI:29105"/>
        <note>catalytic</note>
    </ligand>
</feature>
<protein>
    <recommendedName>
        <fullName evidence="1">Endoribonuclease YbeY</fullName>
        <ecNumber evidence="1">3.1.-.-</ecNumber>
    </recommendedName>
</protein>
<reference key="1">
    <citation type="submission" date="2005-10" db="EMBL/GenBank/DDBJ databases">
        <title>Complete sequence of chromosome 1 of Burkholderia sp. 383.</title>
        <authorList>
            <consortium name="US DOE Joint Genome Institute"/>
            <person name="Copeland A."/>
            <person name="Lucas S."/>
            <person name="Lapidus A."/>
            <person name="Barry K."/>
            <person name="Detter J.C."/>
            <person name="Glavina T."/>
            <person name="Hammon N."/>
            <person name="Israni S."/>
            <person name="Pitluck S."/>
            <person name="Chain P."/>
            <person name="Malfatti S."/>
            <person name="Shin M."/>
            <person name="Vergez L."/>
            <person name="Schmutz J."/>
            <person name="Larimer F."/>
            <person name="Land M."/>
            <person name="Kyrpides N."/>
            <person name="Lykidis A."/>
            <person name="Richardson P."/>
        </authorList>
    </citation>
    <scope>NUCLEOTIDE SEQUENCE [LARGE SCALE GENOMIC DNA]</scope>
    <source>
        <strain>ATCC 17760 / DSM 23089 / LMG 22485 / NCIMB 9086 / R18194 / 383</strain>
    </source>
</reference>
<sequence length="172" mass="19022">MTLHVGAEPAPREDDTEDALREPELDLSVQYGDEITSDVRKTLPKRKLIAEWIEPALFASAQLTVRFVGEEEGRTLNAGYRHKDYPTNVLTFAYDAAPDGTVIGDLVLCCPVVEKEAHEQGKPLTAHYAHLLVHGALHAQGYDHETSDEDAAEMEALEVDILAKLGFPNPYQ</sequence>
<evidence type="ECO:0000255" key="1">
    <source>
        <dbReference type="HAMAP-Rule" id="MF_00009"/>
    </source>
</evidence>
<evidence type="ECO:0000256" key="2">
    <source>
        <dbReference type="SAM" id="MobiDB-lite"/>
    </source>
</evidence>
<evidence type="ECO:0000305" key="3"/>
<comment type="function">
    <text evidence="1">Single strand-specific metallo-endoribonuclease involved in late-stage 70S ribosome quality control and in maturation of the 3' terminus of the 16S rRNA.</text>
</comment>
<comment type="cofactor">
    <cofactor evidence="1">
        <name>Zn(2+)</name>
        <dbReference type="ChEBI" id="CHEBI:29105"/>
    </cofactor>
    <text evidence="1">Binds 1 zinc ion.</text>
</comment>
<comment type="subcellular location">
    <subcellularLocation>
        <location evidence="1">Cytoplasm</location>
    </subcellularLocation>
</comment>
<comment type="similarity">
    <text evidence="1">Belongs to the endoribonuclease YbeY family.</text>
</comment>
<comment type="sequence caution" evidence="3">
    <conflict type="erroneous initiation">
        <sequence resource="EMBL-CDS" id="ABB09617"/>
    </conflict>
</comment>
<keyword id="KW-0963">Cytoplasm</keyword>
<keyword id="KW-0255">Endonuclease</keyword>
<keyword id="KW-0378">Hydrolase</keyword>
<keyword id="KW-0479">Metal-binding</keyword>
<keyword id="KW-0540">Nuclease</keyword>
<keyword id="KW-0690">Ribosome biogenesis</keyword>
<keyword id="KW-0698">rRNA processing</keyword>
<keyword id="KW-0862">Zinc</keyword>
<accession>Q39D49</accession>
<name>YBEY_BURL3</name>
<proteinExistence type="inferred from homology"/>